<reference key="1">
    <citation type="journal article" date="1997" name="Nature">
        <title>Genomic sequence of a Lyme disease spirochaete, Borrelia burgdorferi.</title>
        <authorList>
            <person name="Fraser C.M."/>
            <person name="Casjens S."/>
            <person name="Huang W.M."/>
            <person name="Sutton G.G."/>
            <person name="Clayton R.A."/>
            <person name="Lathigra R."/>
            <person name="White O."/>
            <person name="Ketchum K.A."/>
            <person name="Dodson R.J."/>
            <person name="Hickey E.K."/>
            <person name="Gwinn M.L."/>
            <person name="Dougherty B.A."/>
            <person name="Tomb J.-F."/>
            <person name="Fleischmann R.D."/>
            <person name="Richardson D.L."/>
            <person name="Peterson J.D."/>
            <person name="Kerlavage A.R."/>
            <person name="Quackenbush J."/>
            <person name="Salzberg S.L."/>
            <person name="Hanson M."/>
            <person name="van Vugt R."/>
            <person name="Palmer N."/>
            <person name="Adams M.D."/>
            <person name="Gocayne J.D."/>
            <person name="Weidman J.F."/>
            <person name="Utterback T.R."/>
            <person name="Watthey L."/>
            <person name="McDonald L.A."/>
            <person name="Artiach P."/>
            <person name="Bowman C."/>
            <person name="Garland S.A."/>
            <person name="Fujii C."/>
            <person name="Cotton M.D."/>
            <person name="Horst K."/>
            <person name="Roberts K.M."/>
            <person name="Hatch B."/>
            <person name="Smith H.O."/>
            <person name="Venter J.C."/>
        </authorList>
    </citation>
    <scope>NUCLEOTIDE SEQUENCE [LARGE SCALE GENOMIC DNA]</scope>
    <source>
        <strain>ATCC 35210 / DSM 4680 / CIP 102532 / B31</strain>
    </source>
</reference>
<reference key="2">
    <citation type="submission" date="2012-04" db="PDB data bank">
        <title>Crystal structure of a phosphoglycerate mutase gpmA from Borrelia burgdorferi B31.</title>
        <authorList>
            <consortium name="Seattle structural genomics center for infectious disease (SSGCID)"/>
        </authorList>
    </citation>
    <scope>X-RAY CRYSTALLOGRAPHY (2.30 ANGSTROMS)</scope>
</reference>
<dbReference type="EC" id="5.4.2.11" evidence="1"/>
<dbReference type="EMBL" id="AE000783">
    <property type="protein sequence ID" value="AAC67007.2"/>
    <property type="molecule type" value="Genomic_DNA"/>
</dbReference>
<dbReference type="PIR" id="A70182">
    <property type="entry name" value="A70182"/>
</dbReference>
<dbReference type="RefSeq" id="NP_212792.2">
    <property type="nucleotide sequence ID" value="NC_001318.1"/>
</dbReference>
<dbReference type="RefSeq" id="WP_002657375.1">
    <property type="nucleotide sequence ID" value="NC_001318.1"/>
</dbReference>
<dbReference type="PDB" id="4EMB">
    <property type="method" value="X-ray"/>
    <property type="resolution" value="2.30 A"/>
    <property type="chains" value="A/B/C/D=1-248"/>
</dbReference>
<dbReference type="PDBsum" id="4EMB"/>
<dbReference type="SMR" id="O51602"/>
<dbReference type="STRING" id="224326.BB_0658"/>
<dbReference type="PaxDb" id="224326-BB_0658"/>
<dbReference type="EnsemblBacteria" id="AAC67007">
    <property type="protein sequence ID" value="AAC67007"/>
    <property type="gene ID" value="BB_0658"/>
</dbReference>
<dbReference type="GeneID" id="56567468"/>
<dbReference type="KEGG" id="bbu:BB_0658"/>
<dbReference type="PATRIC" id="fig|224326.49.peg.1049"/>
<dbReference type="HOGENOM" id="CLU_033323_1_1_12"/>
<dbReference type="OrthoDB" id="9781415at2"/>
<dbReference type="UniPathway" id="UPA00109">
    <property type="reaction ID" value="UER00186"/>
</dbReference>
<dbReference type="EvolutionaryTrace" id="O51602"/>
<dbReference type="Proteomes" id="UP000001807">
    <property type="component" value="Chromosome"/>
</dbReference>
<dbReference type="GO" id="GO:0005829">
    <property type="term" value="C:cytosol"/>
    <property type="evidence" value="ECO:0000314"/>
    <property type="project" value="CAFA"/>
</dbReference>
<dbReference type="GO" id="GO:0004619">
    <property type="term" value="F:phosphoglycerate mutase activity"/>
    <property type="evidence" value="ECO:0007669"/>
    <property type="project" value="UniProtKB-EC"/>
</dbReference>
<dbReference type="GO" id="GO:0006094">
    <property type="term" value="P:gluconeogenesis"/>
    <property type="evidence" value="ECO:0007669"/>
    <property type="project" value="UniProtKB-UniRule"/>
</dbReference>
<dbReference type="GO" id="GO:0006096">
    <property type="term" value="P:glycolytic process"/>
    <property type="evidence" value="ECO:0007669"/>
    <property type="project" value="UniProtKB-UniRule"/>
</dbReference>
<dbReference type="CDD" id="cd07067">
    <property type="entry name" value="HP_PGM_like"/>
    <property type="match status" value="1"/>
</dbReference>
<dbReference type="FunFam" id="3.40.50.1240:FF:000003">
    <property type="entry name" value="2,3-bisphosphoglycerate-dependent phosphoglycerate mutase"/>
    <property type="match status" value="1"/>
</dbReference>
<dbReference type="Gene3D" id="3.40.50.1240">
    <property type="entry name" value="Phosphoglycerate mutase-like"/>
    <property type="match status" value="1"/>
</dbReference>
<dbReference type="HAMAP" id="MF_01039">
    <property type="entry name" value="PGAM_GpmA"/>
    <property type="match status" value="1"/>
</dbReference>
<dbReference type="InterPro" id="IPR013078">
    <property type="entry name" value="His_Pase_superF_clade-1"/>
</dbReference>
<dbReference type="InterPro" id="IPR029033">
    <property type="entry name" value="His_PPase_superfam"/>
</dbReference>
<dbReference type="InterPro" id="IPR001345">
    <property type="entry name" value="PG/BPGM_mutase_AS"/>
</dbReference>
<dbReference type="InterPro" id="IPR005952">
    <property type="entry name" value="Phosphogly_mut1"/>
</dbReference>
<dbReference type="NCBIfam" id="TIGR01258">
    <property type="entry name" value="pgm_1"/>
    <property type="match status" value="1"/>
</dbReference>
<dbReference type="NCBIfam" id="NF010713">
    <property type="entry name" value="PRK14115.1"/>
    <property type="match status" value="1"/>
</dbReference>
<dbReference type="PANTHER" id="PTHR11931">
    <property type="entry name" value="PHOSPHOGLYCERATE MUTASE"/>
    <property type="match status" value="1"/>
</dbReference>
<dbReference type="Pfam" id="PF00300">
    <property type="entry name" value="His_Phos_1"/>
    <property type="match status" value="2"/>
</dbReference>
<dbReference type="PIRSF" id="PIRSF000709">
    <property type="entry name" value="6PFK_2-Ptase"/>
    <property type="match status" value="1"/>
</dbReference>
<dbReference type="SMART" id="SM00855">
    <property type="entry name" value="PGAM"/>
    <property type="match status" value="1"/>
</dbReference>
<dbReference type="SUPFAM" id="SSF53254">
    <property type="entry name" value="Phosphoglycerate mutase-like"/>
    <property type="match status" value="1"/>
</dbReference>
<dbReference type="PROSITE" id="PS00175">
    <property type="entry name" value="PG_MUTASE"/>
    <property type="match status" value="1"/>
</dbReference>
<sequence length="248" mass="28379">MYKLVLVRHGESEWNKENLFTGWTDVKLSDKGIDEAVEAGLLLKQEGYSFDIAFSSLLSRANDTLNIILRELGQSYISVKKTWRLNERHYGALQGLNKSETAAKYGEDKVLIWRRSYDVPPMSLDESDDRHPIKDPRYKHIPKRELPSTECLKDTVARVIPYWTDEIAKEVLEGKKVIVAAHGNSLRALVKYFDNLSEEDVLKLNIPTGIPLVYELDKDLNPIKHYYLGDESKIKKAMESVASQGKLK</sequence>
<feature type="chain" id="PRO_0000179852" description="2,3-bisphosphoglycerate-dependent phosphoglycerate mutase">
    <location>
        <begin position="1"/>
        <end position="248"/>
    </location>
</feature>
<feature type="active site" description="Tele-phosphohistidine intermediate" evidence="1">
    <location>
        <position position="9"/>
    </location>
</feature>
<feature type="active site" description="Proton donor/acceptor" evidence="1">
    <location>
        <position position="87"/>
    </location>
</feature>
<feature type="binding site" evidence="1">
    <location>
        <begin position="8"/>
        <end position="15"/>
    </location>
    <ligand>
        <name>substrate</name>
    </ligand>
</feature>
<feature type="binding site" evidence="1">
    <location>
        <begin position="21"/>
        <end position="22"/>
    </location>
    <ligand>
        <name>substrate</name>
    </ligand>
</feature>
<feature type="binding site" evidence="1">
    <location>
        <position position="60"/>
    </location>
    <ligand>
        <name>substrate</name>
    </ligand>
</feature>
<feature type="binding site" evidence="1">
    <location>
        <begin position="87"/>
        <end position="90"/>
    </location>
    <ligand>
        <name>substrate</name>
    </ligand>
</feature>
<feature type="binding site" evidence="1">
    <location>
        <position position="98"/>
    </location>
    <ligand>
        <name>substrate</name>
    </ligand>
</feature>
<feature type="binding site" evidence="1">
    <location>
        <begin position="114"/>
        <end position="115"/>
    </location>
    <ligand>
        <name>substrate</name>
    </ligand>
</feature>
<feature type="binding site" evidence="1">
    <location>
        <begin position="183"/>
        <end position="184"/>
    </location>
    <ligand>
        <name>substrate</name>
    </ligand>
</feature>
<feature type="site" description="Transition state stabilizer" evidence="1">
    <location>
        <position position="182"/>
    </location>
</feature>
<feature type="strand" evidence="2">
    <location>
        <begin position="2"/>
        <end position="8"/>
    </location>
</feature>
<feature type="turn" evidence="2">
    <location>
        <begin position="13"/>
        <end position="18"/>
    </location>
</feature>
<feature type="helix" evidence="2">
    <location>
        <begin position="30"/>
        <end position="45"/>
    </location>
</feature>
<feature type="strand" evidence="2">
    <location>
        <begin position="51"/>
        <end position="55"/>
    </location>
</feature>
<feature type="helix" evidence="2">
    <location>
        <begin position="59"/>
        <end position="71"/>
    </location>
</feature>
<feature type="strand" evidence="2">
    <location>
        <begin position="77"/>
        <end position="81"/>
    </location>
</feature>
<feature type="helix" evidence="2">
    <location>
        <begin position="83"/>
        <end position="85"/>
    </location>
</feature>
<feature type="helix" evidence="2">
    <location>
        <begin position="91"/>
        <end position="93"/>
    </location>
</feature>
<feature type="helix" evidence="2">
    <location>
        <begin position="98"/>
        <end position="105"/>
    </location>
</feature>
<feature type="helix" evidence="2">
    <location>
        <begin position="107"/>
        <end position="115"/>
    </location>
</feature>
<feature type="helix" evidence="2">
    <location>
        <begin position="132"/>
        <end position="134"/>
    </location>
</feature>
<feature type="helix" evidence="2">
    <location>
        <begin position="136"/>
        <end position="138"/>
    </location>
</feature>
<feature type="helix" evidence="2">
    <location>
        <begin position="143"/>
        <end position="145"/>
    </location>
</feature>
<feature type="helix" evidence="2">
    <location>
        <begin position="152"/>
        <end position="165"/>
    </location>
</feature>
<feature type="helix" evidence="2">
    <location>
        <begin position="167"/>
        <end position="172"/>
    </location>
</feature>
<feature type="strand" evidence="2">
    <location>
        <begin position="177"/>
        <end position="181"/>
    </location>
</feature>
<feature type="helix" evidence="2">
    <location>
        <begin position="183"/>
        <end position="194"/>
    </location>
</feature>
<feature type="helix" evidence="2">
    <location>
        <begin position="198"/>
        <end position="203"/>
    </location>
</feature>
<feature type="strand" evidence="2">
    <location>
        <begin position="212"/>
        <end position="216"/>
    </location>
</feature>
<feature type="strand" evidence="2">
    <location>
        <begin position="222"/>
        <end position="227"/>
    </location>
</feature>
<feature type="helix" evidence="2">
    <location>
        <begin position="231"/>
        <end position="243"/>
    </location>
</feature>
<accession>O51602</accession>
<name>GPMA_BORBU</name>
<proteinExistence type="evidence at protein level"/>
<comment type="function">
    <text evidence="1">Catalyzes the interconversion of 2-phosphoglycerate and 3-phosphoglycerate.</text>
</comment>
<comment type="catalytic activity">
    <reaction evidence="1">
        <text>(2R)-2-phosphoglycerate = (2R)-3-phosphoglycerate</text>
        <dbReference type="Rhea" id="RHEA:15901"/>
        <dbReference type="ChEBI" id="CHEBI:58272"/>
        <dbReference type="ChEBI" id="CHEBI:58289"/>
        <dbReference type="EC" id="5.4.2.11"/>
    </reaction>
</comment>
<comment type="pathway">
    <text evidence="1">Carbohydrate degradation; glycolysis; pyruvate from D-glyceraldehyde 3-phosphate: step 3/5.</text>
</comment>
<comment type="similarity">
    <text evidence="1">Belongs to the phosphoglycerate mutase family. BPG-dependent PGAM subfamily.</text>
</comment>
<protein>
    <recommendedName>
        <fullName evidence="1">2,3-bisphosphoglycerate-dependent phosphoglycerate mutase</fullName>
        <shortName evidence="1">BPG-dependent PGAM</shortName>
        <shortName evidence="1">PGAM</shortName>
        <shortName evidence="1">Phosphoglyceromutase</shortName>
        <shortName evidence="1">dPGM</shortName>
        <ecNumber evidence="1">5.4.2.11</ecNumber>
    </recommendedName>
</protein>
<organism>
    <name type="scientific">Borreliella burgdorferi (strain ATCC 35210 / DSM 4680 / CIP 102532 / B31)</name>
    <name type="common">Borrelia burgdorferi</name>
    <dbReference type="NCBI Taxonomy" id="224326"/>
    <lineage>
        <taxon>Bacteria</taxon>
        <taxon>Pseudomonadati</taxon>
        <taxon>Spirochaetota</taxon>
        <taxon>Spirochaetia</taxon>
        <taxon>Spirochaetales</taxon>
        <taxon>Borreliaceae</taxon>
        <taxon>Borreliella</taxon>
    </lineage>
</organism>
<evidence type="ECO:0000255" key="1">
    <source>
        <dbReference type="HAMAP-Rule" id="MF_01039"/>
    </source>
</evidence>
<evidence type="ECO:0007829" key="2">
    <source>
        <dbReference type="PDB" id="4EMB"/>
    </source>
</evidence>
<gene>
    <name evidence="1" type="primary">gpmA</name>
    <name type="ordered locus">BB_0658</name>
</gene>
<keyword id="KW-0002">3D-structure</keyword>
<keyword id="KW-0312">Gluconeogenesis</keyword>
<keyword id="KW-0324">Glycolysis</keyword>
<keyword id="KW-0413">Isomerase</keyword>
<keyword id="KW-1185">Reference proteome</keyword>